<reference key="1">
    <citation type="submission" date="1996-06" db="EMBL/GenBank/DDBJ databases">
        <title>Complete sequence of the mhp operon.</title>
        <authorList>
            <person name="Kawamukai M."/>
        </authorList>
    </citation>
    <scope>NUCLEOTIDE SEQUENCE [GENOMIC DNA]</scope>
    <source>
        <strain>K12 / W3110 / ATCC 27325 / DSM 5911</strain>
    </source>
</reference>
<reference key="2">
    <citation type="journal article" date="1997" name="J. Bacteriol.">
        <title>Genetic characterization and expression in heterologous hosts of the 3-(3-hydroxyphenyl)propionate catabolic pathway of Escherichia coli K-12.</title>
        <authorList>
            <person name="Ferrandez A."/>
            <person name="Garcia J.L."/>
            <person name="Diaz E."/>
        </authorList>
    </citation>
    <scope>NUCLEOTIDE SEQUENCE [GENOMIC DNA]</scope>
    <scope>FUNCTION AS A HYDROLASE</scope>
    <source>
        <strain>K12 / CS520</strain>
    </source>
</reference>
<reference key="3">
    <citation type="submission" date="1997-01" db="EMBL/GenBank/DDBJ databases">
        <title>Sequence of minutes 4-25 of Escherichia coli.</title>
        <authorList>
            <person name="Chung E."/>
            <person name="Allen E."/>
            <person name="Araujo R."/>
            <person name="Aparicio A.M."/>
            <person name="Davis K."/>
            <person name="Duncan M."/>
            <person name="Federspiel N."/>
            <person name="Hyman R."/>
            <person name="Kalman S."/>
            <person name="Komp C."/>
            <person name="Kurdi O."/>
            <person name="Lew H."/>
            <person name="Lin D."/>
            <person name="Namath A."/>
            <person name="Oefner P."/>
            <person name="Roberts D."/>
            <person name="Schramm S."/>
            <person name="Davis R.W."/>
        </authorList>
    </citation>
    <scope>NUCLEOTIDE SEQUENCE [LARGE SCALE GENOMIC DNA]</scope>
    <source>
        <strain>K12 / MG1655 / ATCC 47076</strain>
    </source>
</reference>
<reference key="4">
    <citation type="journal article" date="1997" name="Science">
        <title>The complete genome sequence of Escherichia coli K-12.</title>
        <authorList>
            <person name="Blattner F.R."/>
            <person name="Plunkett G. III"/>
            <person name="Bloch C.A."/>
            <person name="Perna N.T."/>
            <person name="Burland V."/>
            <person name="Riley M."/>
            <person name="Collado-Vides J."/>
            <person name="Glasner J.D."/>
            <person name="Rode C.K."/>
            <person name="Mayhew G.F."/>
            <person name="Gregor J."/>
            <person name="Davis N.W."/>
            <person name="Kirkpatrick H.A."/>
            <person name="Goeden M.A."/>
            <person name="Rose D.J."/>
            <person name="Mau B."/>
            <person name="Shao Y."/>
        </authorList>
    </citation>
    <scope>NUCLEOTIDE SEQUENCE [LARGE SCALE GENOMIC DNA]</scope>
    <source>
        <strain>K12 / MG1655 / ATCC 47076</strain>
    </source>
</reference>
<reference key="5">
    <citation type="journal article" date="2006" name="Mol. Syst. Biol.">
        <title>Highly accurate genome sequences of Escherichia coli K-12 strains MG1655 and W3110.</title>
        <authorList>
            <person name="Hayashi K."/>
            <person name="Morooka N."/>
            <person name="Yamamoto Y."/>
            <person name="Fujita K."/>
            <person name="Isono K."/>
            <person name="Choi S."/>
            <person name="Ohtsubo E."/>
            <person name="Baba T."/>
            <person name="Wanner B.L."/>
            <person name="Mori H."/>
            <person name="Horiuchi T."/>
        </authorList>
    </citation>
    <scope>NUCLEOTIDE SEQUENCE [LARGE SCALE GENOMIC DNA]</scope>
    <source>
        <strain>K12 / W3110 / ATCC 27325 / DSM 5911</strain>
    </source>
</reference>
<reference key="6">
    <citation type="journal article" date="1997" name="Biochemistry">
        <title>Purification, characterization, and stereochemical analysis of a C-C hydrolase: 2-hydroxy-6-keto-nona-2,4-diene-1,9-dioic acid 5,6-hydrolase.</title>
        <authorList>
            <person name="Lam W.W."/>
            <person name="Bugg T.D."/>
        </authorList>
    </citation>
    <scope>PROTEIN SEQUENCE OF 2-18</scope>
    <scope>FUNCTION AS A HYDROLASE</scope>
    <scope>BIOPHYSICOCHEMICAL PROPERTIES</scope>
    <scope>SUBUNIT</scope>
</reference>
<reference key="7">
    <citation type="journal article" date="2005" name="J. Mol. Biol.">
        <title>Catalytic mechanism of C-C hydrolase MhpC from Escherichia coli: kinetic analysis of His263 and Ser110 site-directed mutants.</title>
        <authorList>
            <person name="Li C."/>
            <person name="Montgomery M.G."/>
            <person name="Mohammed F."/>
            <person name="Li J.-J."/>
            <person name="Wood S.P."/>
            <person name="Bugg T.D.H."/>
        </authorList>
    </citation>
    <scope>FUNCTION</scope>
    <scope>CATALYTIC ACTIVITY</scope>
    <scope>BIOPHYSICOCHEMICAL PROPERTIES</scope>
    <scope>MUTAGENESIS OF SER-44; SER-114; HIS-118 AND HIS-267</scope>
    <scope>ACTIVE SITE</scope>
    <scope>REACTION MECHANISM</scope>
</reference>
<reference key="8">
    <citation type="journal article" date="2006" name="Biochemistry">
        <title>Catalytic role for arginine 188 in the C-C hydrolase catalytic mechanism for Escherichia coli MhpC and Burkholderia xenovorans LB400 BphD.</title>
        <authorList>
            <person name="Li C."/>
            <person name="Li J.-J."/>
            <person name="Montgomery M.G."/>
            <person name="Wood S.P."/>
            <person name="Bugg T.D.H."/>
        </authorList>
    </citation>
    <scope>MUTAGENESIS OF ASN-113; PHE-177; ARG-192; CYS-265 AND TRP-268</scope>
    <scope>CATALYTIC MECHANISM</scope>
</reference>
<reference key="9">
    <citation type="journal article" date="2005" name="J. Mol. Biol.">
        <title>The structure of the C-C bond hydrolase MhpC provides insights into its catalytic mechanism.</title>
        <authorList>
            <person name="Dunn G."/>
            <person name="Montgomery M.G."/>
            <person name="Mohammed F."/>
            <person name="Coker A."/>
            <person name="Cooper J.B."/>
            <person name="Robertson T."/>
            <person name="Garcia J.-L."/>
            <person name="Bugg T.D.H."/>
            <person name="Wood S.P."/>
        </authorList>
    </citation>
    <scope>X-RAY CRYSTALLOGRAPHY (2.1 ANGSTROMS) OF 5-288 IN COMPLEX WITH A NON-CLEAVABLE SUBSTRATE ANALOG</scope>
    <scope>MASS SPECTROMETRY</scope>
    <scope>SUBUNIT</scope>
</reference>
<protein>
    <recommendedName>
        <fullName evidence="1">2-hydroxy-6-oxononadienedioate/2-hydroxy-6-oxononatrienedioate hydrolase</fullName>
        <ecNumber evidence="1 2">3.7.1.14</ecNumber>
    </recommendedName>
    <alternativeName>
        <fullName evidence="1">2-hydroxy-6-ketonona-2,4-diene-1,9-dioic acid 5,6-hydrolase</fullName>
    </alternativeName>
    <alternativeName>
        <fullName evidence="1">2-hydroxy-6-oxonona-2,4,7-triene-1,9-dioic acid 5,6-hydrolase</fullName>
    </alternativeName>
    <alternativeName>
        <fullName evidence="1">2-hydroxy-6-oxonona-2,4-diene-1,9-dioic acid 5,6-hydrolase</fullName>
    </alternativeName>
</protein>
<dbReference type="EC" id="3.7.1.14" evidence="1 2"/>
<dbReference type="EMBL" id="D86239">
    <property type="protein sequence ID" value="BAA13054.1"/>
    <property type="status" value="ALT_INIT"/>
    <property type="molecule type" value="Genomic_DNA"/>
</dbReference>
<dbReference type="EMBL" id="Y09555">
    <property type="protein sequence ID" value="CAA70749.1"/>
    <property type="status" value="ALT_INIT"/>
    <property type="molecule type" value="Genomic_DNA"/>
</dbReference>
<dbReference type="EMBL" id="U73857">
    <property type="protein sequence ID" value="AAB18073.1"/>
    <property type="status" value="ALT_INIT"/>
    <property type="molecule type" value="Genomic_DNA"/>
</dbReference>
<dbReference type="EMBL" id="U00096">
    <property type="protein sequence ID" value="AAC73452.3"/>
    <property type="molecule type" value="Genomic_DNA"/>
</dbReference>
<dbReference type="EMBL" id="AP009048">
    <property type="protein sequence ID" value="BAE76131.1"/>
    <property type="status" value="ALT_INIT"/>
    <property type="molecule type" value="Genomic_DNA"/>
</dbReference>
<dbReference type="PIR" id="E64762">
    <property type="entry name" value="E64762"/>
</dbReference>
<dbReference type="RefSeq" id="NP_414883.5">
    <property type="nucleotide sequence ID" value="NC_000913.3"/>
</dbReference>
<dbReference type="RefSeq" id="WP_000121907.1">
    <property type="nucleotide sequence ID" value="NZ_SSZK01000061.1"/>
</dbReference>
<dbReference type="PDB" id="1U2E">
    <property type="method" value="X-ray"/>
    <property type="resolution" value="2.10 A"/>
    <property type="chains" value="A/B/C/D=1-288"/>
</dbReference>
<dbReference type="PDBsum" id="1U2E"/>
<dbReference type="SMR" id="P77044"/>
<dbReference type="BioGRID" id="4260729">
    <property type="interactions" value="11"/>
</dbReference>
<dbReference type="DIP" id="DIP-10207N"/>
<dbReference type="FunCoup" id="P77044">
    <property type="interactions" value="635"/>
</dbReference>
<dbReference type="IntAct" id="P77044">
    <property type="interactions" value="3"/>
</dbReference>
<dbReference type="STRING" id="511145.b0349"/>
<dbReference type="SwissLipids" id="SLP:000001887"/>
<dbReference type="ESTHER" id="ecoli-mhpc">
    <property type="family name" value="Carbon-carbon_bond_hydrolase"/>
</dbReference>
<dbReference type="MEROPS" id="S33.995"/>
<dbReference type="PaxDb" id="511145-b0349"/>
<dbReference type="EnsemblBacteria" id="AAC73452">
    <property type="protein sequence ID" value="AAC73452"/>
    <property type="gene ID" value="b0349"/>
</dbReference>
<dbReference type="GeneID" id="944954"/>
<dbReference type="KEGG" id="ecj:JW0340"/>
<dbReference type="KEGG" id="eco:b0349"/>
<dbReference type="KEGG" id="ecoc:C3026_24880"/>
<dbReference type="PATRIC" id="fig|1411691.4.peg.1929"/>
<dbReference type="EchoBASE" id="EB4168"/>
<dbReference type="eggNOG" id="COG0596">
    <property type="taxonomic scope" value="Bacteria"/>
</dbReference>
<dbReference type="HOGENOM" id="CLU_020336_13_2_6"/>
<dbReference type="InParanoid" id="P77044"/>
<dbReference type="OrthoDB" id="5853561at2"/>
<dbReference type="PhylomeDB" id="P77044"/>
<dbReference type="BioCyc" id="EcoCyc:MHPCHYDROL-MONOMER"/>
<dbReference type="BioCyc" id="MetaCyc:MHPCHYDROL-MONOMER"/>
<dbReference type="BRENDA" id="3.7.1.14">
    <property type="organism ID" value="2026"/>
</dbReference>
<dbReference type="UniPathway" id="UPA00714"/>
<dbReference type="EvolutionaryTrace" id="P77044"/>
<dbReference type="PRO" id="PR:P77044"/>
<dbReference type="Proteomes" id="UP000000625">
    <property type="component" value="Chromosome"/>
</dbReference>
<dbReference type="GO" id="GO:0005737">
    <property type="term" value="C:cytoplasm"/>
    <property type="evidence" value="ECO:0000314"/>
    <property type="project" value="EcoliWiki"/>
</dbReference>
<dbReference type="GO" id="GO:0052823">
    <property type="term" value="F:2-hydroxy-6-oxonona-2,4,7-trienedioate hydrolase activity"/>
    <property type="evidence" value="ECO:0000314"/>
    <property type="project" value="EcoCyc"/>
</dbReference>
<dbReference type="GO" id="GO:0018771">
    <property type="term" value="F:2-hydroxy-6-oxonona-2,4-dienedioate hydrolase activity"/>
    <property type="evidence" value="ECO:0000314"/>
    <property type="project" value="EcoCyc"/>
</dbReference>
<dbReference type="GO" id="GO:0016787">
    <property type="term" value="F:hydrolase activity"/>
    <property type="evidence" value="ECO:0000314"/>
    <property type="project" value="EcoliWiki"/>
</dbReference>
<dbReference type="GO" id="GO:0042803">
    <property type="term" value="F:protein homodimerization activity"/>
    <property type="evidence" value="ECO:0007669"/>
    <property type="project" value="InterPro"/>
</dbReference>
<dbReference type="GO" id="GO:0019622">
    <property type="term" value="P:3-(3-hydroxy)phenylpropionate catabolic process"/>
    <property type="evidence" value="ECO:0000315"/>
    <property type="project" value="EcoCyc"/>
</dbReference>
<dbReference type="GO" id="GO:0019380">
    <property type="term" value="P:3-phenylpropionate catabolic process"/>
    <property type="evidence" value="ECO:0007669"/>
    <property type="project" value="UniProtKB-UniRule"/>
</dbReference>
<dbReference type="FunFam" id="3.40.50.1820:FF:000085">
    <property type="entry name" value="2-hydroxy-6-oxononadienedioate/2-hydroxy-6-oxononatrienedioate hydrolase"/>
    <property type="match status" value="1"/>
</dbReference>
<dbReference type="Gene3D" id="3.40.50.1820">
    <property type="entry name" value="alpha/beta hydrolase"/>
    <property type="match status" value="1"/>
</dbReference>
<dbReference type="HAMAP" id="MF_01654">
    <property type="entry name" value="MhpC"/>
    <property type="match status" value="1"/>
</dbReference>
<dbReference type="InterPro" id="IPR000073">
    <property type="entry name" value="AB_hydrolase_1"/>
</dbReference>
<dbReference type="InterPro" id="IPR029058">
    <property type="entry name" value="AB_hydrolase_fold"/>
</dbReference>
<dbReference type="InterPro" id="IPR000639">
    <property type="entry name" value="Epox_hydrolase-like"/>
</dbReference>
<dbReference type="InterPro" id="IPR023791">
    <property type="entry name" value="MhpC_alpha/beta_hydrolase"/>
</dbReference>
<dbReference type="PANTHER" id="PTHR43689:SF8">
    <property type="entry name" value="ALPHA_BETA-HYDROLASES SUPERFAMILY PROTEIN"/>
    <property type="match status" value="1"/>
</dbReference>
<dbReference type="PANTHER" id="PTHR43689">
    <property type="entry name" value="HYDROLASE"/>
    <property type="match status" value="1"/>
</dbReference>
<dbReference type="Pfam" id="PF00561">
    <property type="entry name" value="Abhydrolase_1"/>
    <property type="match status" value="1"/>
</dbReference>
<dbReference type="PRINTS" id="PR00111">
    <property type="entry name" value="ABHYDROLASE"/>
</dbReference>
<dbReference type="PRINTS" id="PR00412">
    <property type="entry name" value="EPOXHYDRLASE"/>
</dbReference>
<dbReference type="SUPFAM" id="SSF53474">
    <property type="entry name" value="alpha/beta-Hydrolases"/>
    <property type="match status" value="1"/>
</dbReference>
<evidence type="ECO:0000255" key="1">
    <source>
        <dbReference type="HAMAP-Rule" id="MF_01654"/>
    </source>
</evidence>
<evidence type="ECO:0000269" key="2">
    <source>
    </source>
</evidence>
<evidence type="ECO:0000269" key="3">
    <source>
    </source>
</evidence>
<evidence type="ECO:0000269" key="4">
    <source>
    </source>
</evidence>
<evidence type="ECO:0000269" key="5">
    <source>
    </source>
</evidence>
<evidence type="ECO:0000269" key="6">
    <source>
    </source>
</evidence>
<evidence type="ECO:0000305" key="7"/>
<evidence type="ECO:0007829" key="8">
    <source>
        <dbReference type="PDB" id="1U2E"/>
    </source>
</evidence>
<gene>
    <name evidence="1" type="primary">mhpC</name>
    <name type="ordered locus">b0349</name>
    <name type="ordered locus">JW0340</name>
</gene>
<keyword id="KW-0002">3D-structure</keyword>
<keyword id="KW-0058">Aromatic hydrocarbons catabolism</keyword>
<keyword id="KW-0903">Direct protein sequencing</keyword>
<keyword id="KW-0378">Hydrolase</keyword>
<keyword id="KW-1185">Reference proteome</keyword>
<accession>P77044</accession>
<accession>P71204</accession>
<accession>P77205</accession>
<accession>Q2MC75</accession>
<proteinExistence type="evidence at protein level"/>
<sequence length="288" mass="31937">MSYQPQTEAATSRFLNVEEAGKTLRIHFNDCGQGDETVVLLHGSGPGATGWANFSRNIDPLVEAGYRVILLDCPGWGKSDSVVNSGSRSDLNARILKSVVDQLDIAKIHLLGNSMGGHSSVAFTLKWPERVGKLVLMGGGTGGMSLFTPMPTEGIKRLNQLYRQPTIENLKLMMDIFVFDTSDLTDALFEARLNNMLSRRDHLENFVKSLEANPKQFPDFGPRLAEIKAQTLIVWGRNDRFVPMDAGLRLLSGIAGSELHIFRDCGHWAQWEHADAFNQLVLNFLARP</sequence>
<feature type="initiator methionine" description="Removed" evidence="6">
    <location>
        <position position="1"/>
    </location>
</feature>
<feature type="chain" id="PRO_0000207054" description="2-hydroxy-6-oxononadienedioate/2-hydroxy-6-oxononatrienedioate hydrolase">
    <location>
        <begin position="2"/>
        <end position="288"/>
    </location>
</feature>
<feature type="active site" description="Proton acceptor" evidence="1 2">
    <location>
        <position position="267"/>
    </location>
</feature>
<feature type="site" description="Transition state stabilizer" evidence="1 2">
    <location>
        <position position="114"/>
    </location>
</feature>
<feature type="site" description="Catalytic role in ketonization of the dienol substrate (substrate destabilization)" evidence="1 2 4">
    <location>
        <position position="192"/>
    </location>
</feature>
<feature type="mutagenesis site" description="2-fold decrease in catalytic efficiency and more than 5-fold increase in affinity for the natural substrate." evidence="2">
    <original>S</original>
    <variation>A</variation>
    <location>
        <position position="44"/>
    </location>
</feature>
<feature type="mutagenesis site" description="200-fold decrease in catalytic activity and almost 2-fold increase in affinity." evidence="4">
    <original>N</original>
    <variation>A</variation>
    <location>
        <position position="113"/>
    </location>
</feature>
<feature type="mutagenesis site" description="350-fold decrease in catalytic activity and almost 2-fold increase in affinity." evidence="4">
    <original>N</original>
    <variation>H</variation>
    <location>
        <position position="113"/>
    </location>
</feature>
<feature type="mutagenesis site" description="Weakly active. 3-fold decrease in affinity. Fast ketonisation and slow C-C cleavage." evidence="2">
    <original>S</original>
    <variation>A</variation>
    <location>
        <position position="114"/>
    </location>
</feature>
<feature type="mutagenesis site" description="Weakly active. 3-fold decrease in affinity. Fast ketonisation and slow C-C cleavage." evidence="2">
    <original>S</original>
    <variation>G</variation>
    <location>
        <position position="114"/>
    </location>
</feature>
<feature type="mutagenesis site" description="More than 2-fold decrease in catalytic efficiency and 3-fold increase affinity." evidence="2">
    <original>H</original>
    <variation>A</variation>
    <location>
        <position position="118"/>
    </location>
</feature>
<feature type="mutagenesis site" description="100-fold decrease in catalytic activity." evidence="4">
    <original>F</original>
    <variation>D</variation>
    <location>
        <position position="177"/>
    </location>
</feature>
<feature type="mutagenesis site" description="4-fold and 8-fold decrease in catalytic activity and affinity, respectively." evidence="4">
    <original>F</original>
    <variation>G</variation>
    <location>
        <position position="177"/>
    </location>
</feature>
<feature type="mutagenesis site" description="40-fold and 5-fold decrease in catalytic activity and affinity, respectively." evidence="4">
    <original>R</original>
    <variation>K</variation>
    <location>
        <position position="192"/>
    </location>
</feature>
<feature type="mutagenesis site" description="280-fold and 10-fold decrease in catalytic activity and affinity, respectively." evidence="4">
    <original>R</original>
    <variation>Q</variation>
    <location>
        <position position="192"/>
    </location>
</feature>
<feature type="mutagenesis site" description="2-fold decrease in catalytic activity and almost 2-fold increase in affinity." evidence="4">
    <original>C</original>
    <variation>A</variation>
    <location>
        <position position="265"/>
    </location>
</feature>
<feature type="mutagenesis site" description="Weakly active, 1000-fold decrease in catalytic efficiency. Very slow ketonisation and C-C cleavage." evidence="2">
    <original>H</original>
    <variation>A</variation>
    <location>
        <position position="267"/>
    </location>
</feature>
<feature type="mutagenesis site" description="10-fold and 20-fold decrease in catalytic activity and affinity, respectively." evidence="4">
    <original>W</original>
    <variation>G</variation>
    <location>
        <position position="268"/>
    </location>
</feature>
<feature type="sequence conflict" description="In Ref. 1; BAA13054." evidence="7" ref="1">
    <original>E</original>
    <variation>G</variation>
    <location>
        <position position="153"/>
    </location>
</feature>
<feature type="helix" evidence="8">
    <location>
        <begin position="8"/>
        <end position="11"/>
    </location>
</feature>
<feature type="strand" evidence="8">
    <location>
        <begin position="12"/>
        <end position="19"/>
    </location>
</feature>
<feature type="strand" evidence="8">
    <location>
        <begin position="22"/>
        <end position="31"/>
    </location>
</feature>
<feature type="strand" evidence="8">
    <location>
        <begin position="35"/>
        <end position="41"/>
    </location>
</feature>
<feature type="helix" evidence="8">
    <location>
        <begin position="50"/>
        <end position="53"/>
    </location>
</feature>
<feature type="turn" evidence="8">
    <location>
        <begin position="54"/>
        <end position="57"/>
    </location>
</feature>
<feature type="helix" evidence="8">
    <location>
        <begin position="58"/>
        <end position="63"/>
    </location>
</feature>
<feature type="strand" evidence="8">
    <location>
        <begin position="67"/>
        <end position="71"/>
    </location>
</feature>
<feature type="helix" evidence="8">
    <location>
        <begin position="88"/>
        <end position="102"/>
    </location>
</feature>
<feature type="strand" evidence="8">
    <location>
        <begin position="108"/>
        <end position="113"/>
    </location>
</feature>
<feature type="helix" evidence="8">
    <location>
        <begin position="115"/>
        <end position="126"/>
    </location>
</feature>
<feature type="helix" evidence="8">
    <location>
        <begin position="128"/>
        <end position="130"/>
    </location>
</feature>
<feature type="strand" evidence="8">
    <location>
        <begin position="131"/>
        <end position="138"/>
    </location>
</feature>
<feature type="strand" evidence="8">
    <location>
        <begin position="146"/>
        <end position="148"/>
    </location>
</feature>
<feature type="helix" evidence="8">
    <location>
        <begin position="153"/>
        <end position="163"/>
    </location>
</feature>
<feature type="helix" evidence="8">
    <location>
        <begin position="167"/>
        <end position="175"/>
    </location>
</feature>
<feature type="helix" evidence="8">
    <location>
        <begin position="186"/>
        <end position="198"/>
    </location>
</feature>
<feature type="helix" evidence="8">
    <location>
        <begin position="200"/>
        <end position="212"/>
    </location>
</feature>
<feature type="helix" evidence="8">
    <location>
        <begin position="221"/>
        <end position="226"/>
    </location>
</feature>
<feature type="strand" evidence="8">
    <location>
        <begin position="231"/>
        <end position="236"/>
    </location>
</feature>
<feature type="strand" evidence="8">
    <location>
        <begin position="240"/>
        <end position="242"/>
    </location>
</feature>
<feature type="helix" evidence="8">
    <location>
        <begin position="245"/>
        <end position="253"/>
    </location>
</feature>
<feature type="strand" evidence="8">
    <location>
        <begin position="258"/>
        <end position="264"/>
    </location>
</feature>
<feature type="helix" evidence="8">
    <location>
        <begin position="269"/>
        <end position="272"/>
    </location>
</feature>
<feature type="helix" evidence="8">
    <location>
        <begin position="274"/>
        <end position="285"/>
    </location>
</feature>
<name>MHPC_ECOLI</name>
<organism>
    <name type="scientific">Escherichia coli (strain K12)</name>
    <dbReference type="NCBI Taxonomy" id="83333"/>
    <lineage>
        <taxon>Bacteria</taxon>
        <taxon>Pseudomonadati</taxon>
        <taxon>Pseudomonadota</taxon>
        <taxon>Gammaproteobacteria</taxon>
        <taxon>Enterobacterales</taxon>
        <taxon>Enterobacteriaceae</taxon>
        <taxon>Escherichia</taxon>
    </lineage>
</organism>
<comment type="function">
    <text evidence="2 5 6">Catalyzes the cleavage of the C5-C6 bond of 2-hydroxy-6-oxononadienedioate and 2-hydroxy-6-oxononatrienedioate, a dienol ring fission product of the bacterial meta-cleavage pathway for degradation of phenylpropionic acid. MhpC shows some selectivity for the carboxylate of the side chain.</text>
</comment>
<comment type="catalytic activity">
    <reaction evidence="1 2">
        <text>(2Z,4E)-2-hydroxy-6-oxonona-2,4-dienedioate + H2O = (2Z)-2-hydroxypenta-2,4-dienoate + succinate + H(+)</text>
        <dbReference type="Rhea" id="RHEA:34187"/>
        <dbReference type="ChEBI" id="CHEBI:15377"/>
        <dbReference type="ChEBI" id="CHEBI:15378"/>
        <dbReference type="ChEBI" id="CHEBI:30031"/>
        <dbReference type="ChEBI" id="CHEBI:66887"/>
        <dbReference type="ChEBI" id="CHEBI:67152"/>
        <dbReference type="EC" id="3.7.1.14"/>
    </reaction>
</comment>
<comment type="catalytic activity">
    <reaction evidence="1 2">
        <text>(2Z,4E,7E)-2-hydroxy-6-oxonona-2,4,7-trienedioate + H2O = (2Z)-2-hydroxypenta-2,4-dienoate + fumarate + H(+)</text>
        <dbReference type="Rhea" id="RHEA:34191"/>
        <dbReference type="ChEBI" id="CHEBI:15377"/>
        <dbReference type="ChEBI" id="CHEBI:15378"/>
        <dbReference type="ChEBI" id="CHEBI:29806"/>
        <dbReference type="ChEBI" id="CHEBI:66888"/>
        <dbReference type="ChEBI" id="CHEBI:67152"/>
        <dbReference type="EC" id="3.7.1.14"/>
    </reaction>
</comment>
<comment type="biophysicochemical properties">
    <kinetics>
        <KM evidence="6">2.1 uM for 2-hydroxy-6-oxononadienedioate (at pH 8)</KM>
        <KM evidence="2">6.8 uM for 2-hydroxy-6-oxononadienedioate (at pH 8)</KM>
        <text evidence="2">kcat is 28 sec(-1) for hydrolase activity with 2-hydroxy-6-oxononadienedioate as substrate.</text>
    </kinetics>
</comment>
<comment type="pathway">
    <text evidence="1">Aromatic compound metabolism; 3-phenylpropanoate degradation.</text>
</comment>
<comment type="subunit">
    <text evidence="1 3 6">Homodimer.</text>
</comment>
<comment type="mass spectrometry" mass="31717.0" method="Electrospray" evidence="3"/>
<comment type="miscellaneous">
    <text>MhpC is not a serine hydrolase (catalytic triad), as Ser-114 is a non-nucleophilic catalytic residue and Asp-239 is not involved in the catalytic mechanism.</text>
</comment>
<comment type="similarity">
    <text evidence="1 7">Belongs to the AB hydrolase superfamily. MhpC family.</text>
</comment>
<comment type="sequence caution" evidence="7">
    <conflict type="erroneous initiation">
        <sequence resource="EMBL-CDS" id="AAB18073"/>
    </conflict>
    <text>Extended N-terminus.</text>
</comment>
<comment type="sequence caution" evidence="7">
    <conflict type="erroneous initiation">
        <sequence resource="EMBL-CDS" id="BAA13054"/>
    </conflict>
    <text>Extended N-terminus.</text>
</comment>
<comment type="sequence caution" evidence="7">
    <conflict type="erroneous initiation">
        <sequence resource="EMBL-CDS" id="BAE76131"/>
    </conflict>
    <text>Extended N-terminus.</text>
</comment>
<comment type="sequence caution" evidence="7">
    <conflict type="erroneous initiation">
        <sequence resource="EMBL-CDS" id="CAA70749"/>
    </conflict>
    <text>Extended N-terminus.</text>
</comment>